<reference key="1">
    <citation type="journal article" date="1992" name="Dev. Biol.">
        <title>Isolation of cDNAs for LCE and HCE, two constituent proteases of the hatching enzyme of Oryzias latipes, and concurrent expression of their mRNAs during development.</title>
        <authorList>
            <person name="Yasumasu S."/>
            <person name="Yamada K."/>
            <person name="Akasaka K."/>
            <person name="Mitsunaga K."/>
            <person name="Iuchi I."/>
            <person name="Shimada H."/>
            <person name="Yamagami K."/>
        </authorList>
    </citation>
    <scope>NUCLEOTIDE SEQUENCE [MRNA]</scope>
    <scope>FUNCTION</scope>
    <scope>SUBCELLULAR LOCATION</scope>
    <scope>DEVELOPMENTAL STAGE</scope>
    <scope>MISCELLANEOUS</scope>
    <source>
        <tissue>Embryo</tissue>
    </source>
</reference>
<sequence length="279" mass="31490">MNLASSACLLLLFLLGIAQALPVQNEEGHEEGNKEGHGEEGVEEGDEDDFVDFTTRILTSNNNTDQLLLEGDLVAPTNRNAMKCWYNSCFWKKASNGFVVIPYVISSQYSRGEVATIEGAMRAFNGRTCIRFVRRTNEYDFISVVSKNGCYSELGRKGGQQELSLNRGGCMYSGIIQHELNHALGFQHEQTRSDRDSYVRINWQNIIPASAYNFNKHDTNNLNTPYDYSSIMHYGRDAFSIAYGRDSITPIPNPNVPIGQRNGMSRWDITRSNVLYNCR</sequence>
<feature type="signal peptide">
    <location>
        <begin position="1"/>
        <end position="20"/>
    </location>
</feature>
<feature type="propeptide" id="PRO_0000028948" description="Activation peptide">
    <location>
        <begin position="21"/>
        <end position="79"/>
    </location>
</feature>
<feature type="chain" id="PRO_0000028949" description="High choriolytic enzyme 2">
    <location>
        <begin position="80"/>
        <end position="279"/>
    </location>
</feature>
<feature type="domain" description="Peptidase M12A" evidence="2">
    <location>
        <begin position="80"/>
        <end position="279"/>
    </location>
</feature>
<feature type="region of interest" description="Disordered" evidence="3">
    <location>
        <begin position="26"/>
        <end position="46"/>
    </location>
</feature>
<feature type="compositionally biased region" description="Basic and acidic residues" evidence="3">
    <location>
        <begin position="26"/>
        <end position="40"/>
    </location>
</feature>
<feature type="active site" evidence="2">
    <location>
        <position position="179"/>
    </location>
</feature>
<feature type="binding site" evidence="2">
    <location>
        <position position="178"/>
    </location>
    <ligand>
        <name>Zn(2+)</name>
        <dbReference type="ChEBI" id="CHEBI:29105"/>
        <note>catalytic</note>
    </ligand>
</feature>
<feature type="binding site" evidence="2">
    <location>
        <position position="182"/>
    </location>
    <ligand>
        <name>Zn(2+)</name>
        <dbReference type="ChEBI" id="CHEBI:29105"/>
        <note>catalytic</note>
    </ligand>
</feature>
<feature type="binding site" evidence="2">
    <location>
        <position position="188"/>
    </location>
    <ligand>
        <name>Zn(2+)</name>
        <dbReference type="ChEBI" id="CHEBI:29105"/>
        <note>catalytic</note>
    </ligand>
</feature>
<feature type="glycosylation site" description="N-linked (GlcNAc...) asparagine" evidence="1">
    <location>
        <position position="62"/>
    </location>
</feature>
<feature type="disulfide bond" evidence="2">
    <location>
        <begin position="84"/>
        <end position="89"/>
    </location>
</feature>
<feature type="disulfide bond" evidence="2">
    <location>
        <begin position="129"/>
        <end position="278"/>
    </location>
</feature>
<feature type="disulfide bond" evidence="2">
    <location>
        <begin position="150"/>
        <end position="170"/>
    </location>
</feature>
<protein>
    <recommendedName>
        <fullName>High choriolytic enzyme 2</fullName>
        <ecNumber>3.4.24.67</ecNumber>
    </recommendedName>
    <alternativeName>
        <fullName>Choriolysin H 2</fullName>
    </alternativeName>
    <alternativeName>
        <fullName>HCE21</fullName>
    </alternativeName>
    <alternativeName>
        <fullName>Hatching enzyme zinc-protease subunit HCE 2</fullName>
    </alternativeName>
</protein>
<dbReference type="EC" id="3.4.24.67"/>
<dbReference type="EMBL" id="M96171">
    <property type="protein sequence ID" value="AAA49439.1"/>
    <property type="molecule type" value="mRNA"/>
</dbReference>
<dbReference type="PIR" id="C48826">
    <property type="entry name" value="C48826"/>
</dbReference>
<dbReference type="RefSeq" id="NP_001098293.1">
    <property type="nucleotide sequence ID" value="NM_001104823.1"/>
</dbReference>
<dbReference type="SMR" id="P31581"/>
<dbReference type="FunCoup" id="P31581">
    <property type="interactions" value="185"/>
</dbReference>
<dbReference type="STRING" id="8090.ENSORLP00000018636"/>
<dbReference type="MEROPS" id="M12.007"/>
<dbReference type="GlyCosmos" id="P31581">
    <property type="glycosylation" value="1 site, No reported glycans"/>
</dbReference>
<dbReference type="GeneID" id="100049452"/>
<dbReference type="KEGG" id="ola:100049452"/>
<dbReference type="CTD" id="100049452"/>
<dbReference type="eggNOG" id="KOG3714">
    <property type="taxonomic scope" value="Eukaryota"/>
</dbReference>
<dbReference type="InParanoid" id="P31581"/>
<dbReference type="OrthoDB" id="291007at2759"/>
<dbReference type="BRENDA" id="3.4.24.67">
    <property type="organism ID" value="3199"/>
</dbReference>
<dbReference type="Proteomes" id="UP000001038">
    <property type="component" value="Unplaced"/>
</dbReference>
<dbReference type="Proteomes" id="UP000265180">
    <property type="component" value="Chromosome 9"/>
</dbReference>
<dbReference type="Proteomes" id="UP000265200">
    <property type="component" value="Chromosome 9"/>
</dbReference>
<dbReference type="GO" id="GO:0042588">
    <property type="term" value="C:zymogen granule"/>
    <property type="evidence" value="ECO:0007669"/>
    <property type="project" value="UniProtKB-SubCell"/>
</dbReference>
<dbReference type="GO" id="GO:0004222">
    <property type="term" value="F:metalloendopeptidase activity"/>
    <property type="evidence" value="ECO:0000318"/>
    <property type="project" value="GO_Central"/>
</dbReference>
<dbReference type="GO" id="GO:0008270">
    <property type="term" value="F:zinc ion binding"/>
    <property type="evidence" value="ECO:0007669"/>
    <property type="project" value="InterPro"/>
</dbReference>
<dbReference type="GO" id="GO:0006508">
    <property type="term" value="P:proteolysis"/>
    <property type="evidence" value="ECO:0007669"/>
    <property type="project" value="UniProtKB-KW"/>
</dbReference>
<dbReference type="CDD" id="cd04283">
    <property type="entry name" value="ZnMc_hatching_enzyme"/>
    <property type="match status" value="1"/>
</dbReference>
<dbReference type="FunFam" id="3.40.390.10:FF:000040">
    <property type="entry name" value="Metalloendopeptidase"/>
    <property type="match status" value="1"/>
</dbReference>
<dbReference type="Gene3D" id="3.40.390.10">
    <property type="entry name" value="Collagenase (Catalytic Domain)"/>
    <property type="match status" value="1"/>
</dbReference>
<dbReference type="InterPro" id="IPR024079">
    <property type="entry name" value="MetalloPept_cat_dom_sf"/>
</dbReference>
<dbReference type="InterPro" id="IPR001506">
    <property type="entry name" value="Peptidase_M12A"/>
</dbReference>
<dbReference type="InterPro" id="IPR006026">
    <property type="entry name" value="Peptidase_Metallo"/>
</dbReference>
<dbReference type="InterPro" id="IPR034039">
    <property type="entry name" value="ZnMP_hatching_enz"/>
</dbReference>
<dbReference type="PANTHER" id="PTHR10127">
    <property type="entry name" value="DISCOIDIN, CUB, EGF, LAMININ , AND ZINC METALLOPROTEASE DOMAIN CONTAINING"/>
    <property type="match status" value="1"/>
</dbReference>
<dbReference type="PANTHER" id="PTHR10127:SF839">
    <property type="entry name" value="HATCHING ENZYME 1.2-RELATED"/>
    <property type="match status" value="1"/>
</dbReference>
<dbReference type="Pfam" id="PF01400">
    <property type="entry name" value="Astacin"/>
    <property type="match status" value="1"/>
</dbReference>
<dbReference type="PRINTS" id="PR00480">
    <property type="entry name" value="ASTACIN"/>
</dbReference>
<dbReference type="SMART" id="SM00235">
    <property type="entry name" value="ZnMc"/>
    <property type="match status" value="1"/>
</dbReference>
<dbReference type="SUPFAM" id="SSF55486">
    <property type="entry name" value="Metalloproteases ('zincins'), catalytic domain"/>
    <property type="match status" value="1"/>
</dbReference>
<dbReference type="PROSITE" id="PS51864">
    <property type="entry name" value="ASTACIN"/>
    <property type="match status" value="1"/>
</dbReference>
<dbReference type="PROSITE" id="PS00142">
    <property type="entry name" value="ZINC_PROTEASE"/>
    <property type="match status" value="1"/>
</dbReference>
<accession>P31581</accession>
<organism>
    <name type="scientific">Oryzias latipes</name>
    <name type="common">Japanese rice fish</name>
    <name type="synonym">Japanese killifish</name>
    <dbReference type="NCBI Taxonomy" id="8090"/>
    <lineage>
        <taxon>Eukaryota</taxon>
        <taxon>Metazoa</taxon>
        <taxon>Chordata</taxon>
        <taxon>Craniata</taxon>
        <taxon>Vertebrata</taxon>
        <taxon>Euteleostomi</taxon>
        <taxon>Actinopterygii</taxon>
        <taxon>Neopterygii</taxon>
        <taxon>Teleostei</taxon>
        <taxon>Neoteleostei</taxon>
        <taxon>Acanthomorphata</taxon>
        <taxon>Ovalentaria</taxon>
        <taxon>Atherinomorphae</taxon>
        <taxon>Beloniformes</taxon>
        <taxon>Adrianichthyidae</taxon>
        <taxon>Oryziinae</taxon>
        <taxon>Oryzias</taxon>
    </lineage>
</organism>
<gene>
    <name type="primary">hceb</name>
</gene>
<keyword id="KW-0968">Cytoplasmic vesicle</keyword>
<keyword id="KW-1015">Disulfide bond</keyword>
<keyword id="KW-0325">Glycoprotein</keyword>
<keyword id="KW-0378">Hydrolase</keyword>
<keyword id="KW-0479">Metal-binding</keyword>
<keyword id="KW-0482">Metalloprotease</keyword>
<keyword id="KW-0645">Protease</keyword>
<keyword id="KW-1185">Reference proteome</keyword>
<keyword id="KW-0732">Signal</keyword>
<keyword id="KW-0862">Zinc</keyword>
<keyword id="KW-0865">Zymogen</keyword>
<evidence type="ECO:0000255" key="1"/>
<evidence type="ECO:0000255" key="2">
    <source>
        <dbReference type="PROSITE-ProRule" id="PRU01211"/>
    </source>
</evidence>
<evidence type="ECO:0000256" key="3">
    <source>
        <dbReference type="SAM" id="MobiDB-lite"/>
    </source>
</evidence>
<evidence type="ECO:0000269" key="4">
    <source>
    </source>
</evidence>
<evidence type="ECO:0000303" key="5">
    <source>
    </source>
</evidence>
<evidence type="ECO:0000305" key="6">
    <source>
    </source>
</evidence>
<name>HCE2_ORYLA</name>
<proteinExistence type="evidence at transcript level"/>
<comment type="function">
    <text evidence="5">Participates in the breakdown of the egg envelope, which is derived from the egg extracellular matrix, at the time of hatching. Thus allowing the newly hatched fish to swim free. HCE binds tightly to the egg envelope while it exerts the choriolytic swelling action.</text>
</comment>
<comment type="catalytic activity">
    <reaction>
        <text>Hydrolysis of the inner layer of fish egg envelope. Also hydrolysis of casein and small molecule substrates such as succinyl-Leu-Leu-Val-Tyr-|-7-(4-methyl)coumarylamide.</text>
        <dbReference type="EC" id="3.4.24.67"/>
    </reaction>
</comment>
<comment type="cofactor">
    <cofactor evidence="2">
        <name>Zn(2+)</name>
        <dbReference type="ChEBI" id="CHEBI:29105"/>
    </cofactor>
    <text evidence="2">Binds 1 zinc ion per subunit.</text>
</comment>
<comment type="subcellular location">
    <subcellularLocation>
        <location evidence="4">Zymogen granule</location>
    </subcellularLocation>
    <text evidence="6">Stored as proenzymes in the zymogen granules.</text>
</comment>
<comment type="developmental stage">
    <text evidence="4">Production of the protein starts in day 2 to day 3 embryos and increases thereafter until hatching.</text>
</comment>
<comment type="miscellaneous">
    <text evidence="5">In medaka the hatching enzyme system is composed of two distinct proteases, the high choriolytic enzyme (HCE), of which there are two isoforms, and the low choriolytic enzyme (LCE).</text>
</comment>